<evidence type="ECO:0000255" key="1">
    <source>
        <dbReference type="HAMAP-Rule" id="MF_00918"/>
    </source>
</evidence>
<organism>
    <name type="scientific">Streptococcus pyogenes serotype M6 (strain ATCC BAA-946 / MGAS10394)</name>
    <dbReference type="NCBI Taxonomy" id="286636"/>
    <lineage>
        <taxon>Bacteria</taxon>
        <taxon>Bacillati</taxon>
        <taxon>Bacillota</taxon>
        <taxon>Bacilli</taxon>
        <taxon>Lactobacillales</taxon>
        <taxon>Streptococcaceae</taxon>
        <taxon>Streptococcus</taxon>
    </lineage>
</organism>
<proteinExistence type="inferred from homology"/>
<sequence>MGRKWANIVAKKTAKDGATSKVYAKFGVEIYVAAKQGEPDPELNTALKFVIDRAKQAQVPKHVIDKAIDKAKGNTDETFVEGRYEGFGPNGSMIIVDTLTSNVNRTAANVRTAYGKNGGNMGASGSVSYLFDKKGVIVFAGDDADSVFEQLLEADVDVDDVEAEEGTITVYTAPTDLHKGIQALRDNGVEEFQVTELEMIPQSEVVLEGDDLETFEKLIDALESDDDVQKVYHNVADL</sequence>
<gene>
    <name type="ordered locus">M6_Spy0297</name>
</gene>
<name>Y297_STRP6</name>
<feature type="chain" id="PRO_0000175908" description="Probable transcriptional regulatory protein M6_Spy0297">
    <location>
        <begin position="1"/>
        <end position="238"/>
    </location>
</feature>
<protein>
    <recommendedName>
        <fullName evidence="1">Probable transcriptional regulatory protein M6_Spy0297</fullName>
    </recommendedName>
</protein>
<dbReference type="EMBL" id="CP000003">
    <property type="protein sequence ID" value="AAT86432.1"/>
    <property type="molecule type" value="Genomic_DNA"/>
</dbReference>
<dbReference type="RefSeq" id="WP_011184183.1">
    <property type="nucleotide sequence ID" value="NC_006086.1"/>
</dbReference>
<dbReference type="SMR" id="Q5XDT1"/>
<dbReference type="KEGG" id="spa:M6_Spy0297"/>
<dbReference type="HOGENOM" id="CLU_062974_2_0_9"/>
<dbReference type="Proteomes" id="UP000001167">
    <property type="component" value="Chromosome"/>
</dbReference>
<dbReference type="GO" id="GO:0005829">
    <property type="term" value="C:cytosol"/>
    <property type="evidence" value="ECO:0007669"/>
    <property type="project" value="TreeGrafter"/>
</dbReference>
<dbReference type="GO" id="GO:0003677">
    <property type="term" value="F:DNA binding"/>
    <property type="evidence" value="ECO:0007669"/>
    <property type="project" value="UniProtKB-UniRule"/>
</dbReference>
<dbReference type="GO" id="GO:0006355">
    <property type="term" value="P:regulation of DNA-templated transcription"/>
    <property type="evidence" value="ECO:0007669"/>
    <property type="project" value="UniProtKB-UniRule"/>
</dbReference>
<dbReference type="FunFam" id="1.10.10.200:FF:000003">
    <property type="entry name" value="Probable transcriptional regulatory protein YeeN"/>
    <property type="match status" value="1"/>
</dbReference>
<dbReference type="FunFam" id="3.30.70.980:FF:000004">
    <property type="entry name" value="Probable transcriptional regulatory protein YeeN"/>
    <property type="match status" value="1"/>
</dbReference>
<dbReference type="Gene3D" id="1.10.10.200">
    <property type="match status" value="1"/>
</dbReference>
<dbReference type="Gene3D" id="3.30.70.980">
    <property type="match status" value="2"/>
</dbReference>
<dbReference type="HAMAP" id="MF_00693">
    <property type="entry name" value="Transcrip_reg_TACO1"/>
    <property type="match status" value="1"/>
</dbReference>
<dbReference type="HAMAP" id="MF_00918">
    <property type="entry name" value="Transcrip_reg_TACO1_YeeN"/>
    <property type="match status" value="1"/>
</dbReference>
<dbReference type="InterPro" id="IPR017856">
    <property type="entry name" value="Integrase-like_N"/>
</dbReference>
<dbReference type="InterPro" id="IPR048300">
    <property type="entry name" value="TACO1_YebC-like_2nd/3rd_dom"/>
</dbReference>
<dbReference type="InterPro" id="IPR049083">
    <property type="entry name" value="TACO1_YebC_N"/>
</dbReference>
<dbReference type="InterPro" id="IPR002876">
    <property type="entry name" value="Transcrip_reg_TACO1-like"/>
</dbReference>
<dbReference type="InterPro" id="IPR026564">
    <property type="entry name" value="Transcrip_reg_TACO1-like_dom3"/>
</dbReference>
<dbReference type="InterPro" id="IPR026562">
    <property type="entry name" value="Transcrip_reg_TACO1_YeeN"/>
</dbReference>
<dbReference type="InterPro" id="IPR029072">
    <property type="entry name" value="YebC-like"/>
</dbReference>
<dbReference type="NCBIfam" id="NF001030">
    <property type="entry name" value="PRK00110.1"/>
    <property type="match status" value="1"/>
</dbReference>
<dbReference type="NCBIfam" id="NF009044">
    <property type="entry name" value="PRK12378.1"/>
    <property type="match status" value="1"/>
</dbReference>
<dbReference type="NCBIfam" id="TIGR01033">
    <property type="entry name" value="YebC/PmpR family DNA-binding transcriptional regulator"/>
    <property type="match status" value="1"/>
</dbReference>
<dbReference type="PANTHER" id="PTHR12532">
    <property type="entry name" value="TRANSLATIONAL ACTIVATOR OF CYTOCHROME C OXIDASE 1"/>
    <property type="match status" value="1"/>
</dbReference>
<dbReference type="PANTHER" id="PTHR12532:SF0">
    <property type="entry name" value="TRANSLATIONAL ACTIVATOR OF CYTOCHROME C OXIDASE 1"/>
    <property type="match status" value="1"/>
</dbReference>
<dbReference type="Pfam" id="PF20772">
    <property type="entry name" value="TACO1_YebC_N"/>
    <property type="match status" value="1"/>
</dbReference>
<dbReference type="Pfam" id="PF01709">
    <property type="entry name" value="Transcrip_reg"/>
    <property type="match status" value="1"/>
</dbReference>
<dbReference type="SUPFAM" id="SSF75625">
    <property type="entry name" value="YebC-like"/>
    <property type="match status" value="1"/>
</dbReference>
<reference key="1">
    <citation type="journal article" date="2004" name="J. Infect. Dis.">
        <title>Progress toward characterization of the group A Streptococcus metagenome: complete genome sequence of a macrolide-resistant serotype M6 strain.</title>
        <authorList>
            <person name="Banks D.J."/>
            <person name="Porcella S.F."/>
            <person name="Barbian K.D."/>
            <person name="Beres S.B."/>
            <person name="Philips L.E."/>
            <person name="Voyich J.M."/>
            <person name="DeLeo F.R."/>
            <person name="Martin J.M."/>
            <person name="Somerville G.A."/>
            <person name="Musser J.M."/>
        </authorList>
    </citation>
    <scope>NUCLEOTIDE SEQUENCE [LARGE SCALE GENOMIC DNA]</scope>
    <source>
        <strain>ATCC BAA-946 / MGAS10394</strain>
    </source>
</reference>
<keyword id="KW-0963">Cytoplasm</keyword>
<keyword id="KW-0238">DNA-binding</keyword>
<keyword id="KW-0804">Transcription</keyword>
<keyword id="KW-0805">Transcription regulation</keyword>
<comment type="subcellular location">
    <subcellularLocation>
        <location evidence="1">Cytoplasm</location>
    </subcellularLocation>
</comment>
<comment type="similarity">
    <text evidence="1">Belongs to the TACO1 family. YeeN subfamily.</text>
</comment>
<accession>Q5XDT1</accession>